<proteinExistence type="inferred from homology"/>
<evidence type="ECO:0000250" key="1">
    <source>
        <dbReference type="UniProtKB" id="P20966"/>
    </source>
</evidence>
<evidence type="ECO:0000250" key="2">
    <source>
        <dbReference type="UniProtKB" id="P47308"/>
    </source>
</evidence>
<evidence type="ECO:0000255" key="3">
    <source>
        <dbReference type="PROSITE-ProRule" id="PRU00417"/>
    </source>
</evidence>
<evidence type="ECO:0000255" key="4">
    <source>
        <dbReference type="PROSITE-ProRule" id="PRU00422"/>
    </source>
</evidence>
<evidence type="ECO:0000255" key="5">
    <source>
        <dbReference type="PROSITE-ProRule" id="PRU00427"/>
    </source>
</evidence>
<evidence type="ECO:0000305" key="6"/>
<reference key="1">
    <citation type="journal article" date="1996" name="Nucleic Acids Res.">
        <title>Complete sequence analysis of the genome of the bacterium Mycoplasma pneumoniae.</title>
        <authorList>
            <person name="Himmelreich R."/>
            <person name="Hilbert H."/>
            <person name="Plagens H."/>
            <person name="Pirkl E."/>
            <person name="Li B.-C."/>
            <person name="Herrmann R."/>
        </authorList>
    </citation>
    <scope>NUCLEOTIDE SEQUENCE [LARGE SCALE GENOMIC DNA]</scope>
    <source>
        <strain>ATCC 29342 / M129 / Subtype 1</strain>
    </source>
</reference>
<keyword id="KW-1003">Cell membrane</keyword>
<keyword id="KW-0418">Kinase</keyword>
<keyword id="KW-0472">Membrane</keyword>
<keyword id="KW-0597">Phosphoprotein</keyword>
<keyword id="KW-0598">Phosphotransferase system</keyword>
<keyword id="KW-1185">Reference proteome</keyword>
<keyword id="KW-0762">Sugar transport</keyword>
<keyword id="KW-0808">Transferase</keyword>
<keyword id="KW-0812">Transmembrane</keyword>
<keyword id="KW-1133">Transmembrane helix</keyword>
<keyword id="KW-0813">Transport</keyword>
<comment type="function">
    <text evidence="1 2">The phosphoenolpyruvate-dependent sugar phosphotransferase system (sugar PTS), a major carbohydrate active transport system, catalyzes the phosphorylation of incoming sugar substrates concomitantly with their translocation across the cell membrane. This system is involved in fructose transport.</text>
</comment>
<comment type="catalytic activity">
    <reaction evidence="1">
        <text>D-fructose(out) + N(pros)-phospho-L-histidyl-[protein] = D-fructose 1-phosphate(in) + L-histidyl-[protein]</text>
        <dbReference type="Rhea" id="RHEA:49252"/>
        <dbReference type="Rhea" id="RHEA-COMP:9745"/>
        <dbReference type="Rhea" id="RHEA-COMP:9746"/>
        <dbReference type="ChEBI" id="CHEBI:29979"/>
        <dbReference type="ChEBI" id="CHEBI:37721"/>
        <dbReference type="ChEBI" id="CHEBI:58674"/>
        <dbReference type="ChEBI" id="CHEBI:64837"/>
        <dbReference type="EC" id="2.7.1.202"/>
    </reaction>
</comment>
<comment type="subcellular location">
    <subcellularLocation>
        <location evidence="5">Cell membrane</location>
        <topology evidence="5">Multi-pass membrane protein</topology>
    </subcellularLocation>
</comment>
<comment type="domain">
    <text evidence="3">The PTS EIIA type-2 domain is phosphorylated by phospho-HPr on a histidyl residue. Then, it transfers the phosphoryl group to the PTS EIIB type-2 domain.</text>
</comment>
<comment type="domain">
    <text evidence="4">The PTS EIIB type-2 domain is phosphorylated by phospho-EIIA on a cysteinyl residue. Then, it transfers the phosphoryl group to the sugar substrate concomitantly with the sugar uptake processed by the PTS EIIC type-2 domain.</text>
</comment>
<comment type="domain">
    <text evidence="5">The EIIC type-2 domain forms the PTS system translocation channel and contains the specific substrate-binding site.</text>
</comment>
<protein>
    <recommendedName>
        <fullName evidence="2">PTS system fructose-specific EIIABC component</fullName>
    </recommendedName>
    <alternativeName>
        <fullName evidence="2">EIIABC-Fru</fullName>
    </alternativeName>
    <domain>
        <recommendedName>
            <fullName evidence="2">PTS system fructose-specific EIIA component</fullName>
        </recommendedName>
        <alternativeName>
            <fullName evidence="2">EII-Fru</fullName>
        </alternativeName>
        <alternativeName>
            <fullName evidence="2">Fructose-specific phosphotransferase enzyme IIA component</fullName>
        </alternativeName>
    </domain>
    <domain>
        <recommendedName>
            <fullName evidence="2">PTS system fructose-specific EIIB component</fullName>
            <ecNumber evidence="1">2.7.1.202</ecNumber>
        </recommendedName>
        <alternativeName>
            <fullName evidence="2">EIII-Fru</fullName>
        </alternativeName>
        <alternativeName>
            <fullName evidence="2">Fructose-specific phosphotransferase enzyme IIB component</fullName>
        </alternativeName>
    </domain>
    <domain>
        <recommendedName>
            <fullName evidence="2">PTS system fructose-specific EIIC component</fullName>
        </recommendedName>
        <alternativeName>
            <fullName evidence="2">Fructose permease IIC component</fullName>
        </alternativeName>
    </domain>
</protein>
<gene>
    <name evidence="2" type="primary">fruA</name>
    <name type="ordered locus">MPN_078</name>
    <name type="ORF">MP077</name>
</gene>
<sequence length="694" mass="75164">MFKPLLSAELFFNWTAKDFKDKTSFLKQACRVLQDKNCIKEEQIALTALKEREAQITTGIMSKLALPHMQSATVLKPFVAVFKVNNVDWQSLDNQPVKLIFLIGVPKDQGNLHLEFISQFSKLMLQDEFANKVPNIRSFNGLINLIDSFQQTAVASQPVVNEAAAQTEEPKDTNTQYDFVAVTACPTGIAHTFMAKEALEKFARDHNLKVKVETQGTDGIQNQLTESDLNNTKGIILACDRLIDLTRFYGHANVVEVSTTKAIKTPQTVYDQVVKKEGKLLGNKSSDSASQTELKETTEQLSFKDFHKRIYRAILSGVSYMLPFVVFGGILIAIAFLIDINNAGNAGKQFGSKDPIANWFKTLGGLSFGLIVPILSAYIAFALVGRQGLLPGFIVGLISAGKFLLNIDIVTGKIDWATESKVSSGFFGAIFGGLLAAVLIIVQQRYIYRKLPQALQGIKNILFIPLLGTLVTAALFWVINIPLIYLNYGLSKFLQIMDKPYLAPLLGLVIGLMMCFDLGGPVNKAAYVFGVVSLESQNSGTVAMASAILSGMVPPLGIAIAATIRKQCFDKEELPAAYACYVMGLSFISEGAIPFVAKRPKIMLAANLIGGAVCGVLTGAFALTIRAPHGGVFVFALLKTNLEGIAGNTLQIGAGVGLALLALIVSSFISAGIIIGHNLLVVRKKTKQLVNTNA</sequence>
<accession>P75039</accession>
<feature type="chain" id="PRO_0000186511" description="PTS system fructose-specific EIIABC component">
    <location>
        <begin position="1"/>
        <end position="694"/>
    </location>
</feature>
<feature type="transmembrane region" description="Helical" evidence="5">
    <location>
        <begin position="318"/>
        <end position="338"/>
    </location>
</feature>
<feature type="transmembrane region" description="Helical" evidence="5">
    <location>
        <begin position="364"/>
        <end position="384"/>
    </location>
</feature>
<feature type="transmembrane region" description="Helical" evidence="5">
    <location>
        <begin position="390"/>
        <end position="410"/>
    </location>
</feature>
<feature type="transmembrane region" description="Helical" evidence="5">
    <location>
        <begin position="422"/>
        <end position="442"/>
    </location>
</feature>
<feature type="transmembrane region" description="Helical" evidence="5">
    <location>
        <begin position="461"/>
        <end position="481"/>
    </location>
</feature>
<feature type="transmembrane region" description="Helical" evidence="5">
    <location>
        <begin position="502"/>
        <end position="522"/>
    </location>
</feature>
<feature type="transmembrane region" description="Helical" evidence="5">
    <location>
        <begin position="542"/>
        <end position="562"/>
    </location>
</feature>
<feature type="transmembrane region" description="Helical" evidence="5">
    <location>
        <begin position="576"/>
        <end position="596"/>
    </location>
</feature>
<feature type="transmembrane region" description="Helical" evidence="5">
    <location>
        <begin position="602"/>
        <end position="622"/>
    </location>
</feature>
<feature type="transmembrane region" description="Helical" evidence="5">
    <location>
        <begin position="655"/>
        <end position="675"/>
    </location>
</feature>
<feature type="domain" description="PTS EIIA type-2" evidence="3">
    <location>
        <begin position="4"/>
        <end position="149"/>
    </location>
</feature>
<feature type="domain" description="PTS EIIB type-2" evidence="4">
    <location>
        <begin position="179"/>
        <end position="275"/>
    </location>
</feature>
<feature type="domain" description="PTS EIIC type-2" evidence="5">
    <location>
        <begin position="310"/>
        <end position="687"/>
    </location>
</feature>
<feature type="active site" description="Tele-phosphohistidine intermediate; for EIIA activity" evidence="3">
    <location>
        <position position="68"/>
    </location>
</feature>
<feature type="active site" description="Phosphocysteine intermediate; for EIIB activity" evidence="6">
    <location>
        <position position="185"/>
    </location>
</feature>
<feature type="modified residue" description="Phosphohistidine; by HPr" evidence="6">
    <location>
        <position position="68"/>
    </location>
</feature>
<feature type="modified residue" description="Phosphocysteine; by EIIA" evidence="4">
    <location>
        <position position="185"/>
    </location>
</feature>
<name>PTF3A_MYCPN</name>
<dbReference type="EC" id="2.7.1.202" evidence="1"/>
<dbReference type="EMBL" id="U00089">
    <property type="protein sequence ID" value="AAB95725.1"/>
    <property type="molecule type" value="Genomic_DNA"/>
</dbReference>
<dbReference type="PIR" id="S73403">
    <property type="entry name" value="S73403"/>
</dbReference>
<dbReference type="RefSeq" id="NP_109766.1">
    <property type="nucleotide sequence ID" value="NC_000912.1"/>
</dbReference>
<dbReference type="RefSeq" id="WP_010874435.1">
    <property type="nucleotide sequence ID" value="NZ_OU342337.1"/>
</dbReference>
<dbReference type="SMR" id="P75039"/>
<dbReference type="STRING" id="272634.MPN_078"/>
<dbReference type="EnsemblBacteria" id="AAB95725">
    <property type="protein sequence ID" value="AAB95725"/>
    <property type="gene ID" value="MPN_078"/>
</dbReference>
<dbReference type="KEGG" id="mpn:MPN_078"/>
<dbReference type="PATRIC" id="fig|272634.6.peg.79"/>
<dbReference type="HOGENOM" id="CLU_013155_1_0_14"/>
<dbReference type="OrthoDB" id="9782569at2"/>
<dbReference type="BioCyc" id="MPNE272634:G1GJ3-122-MONOMER"/>
<dbReference type="Proteomes" id="UP000000808">
    <property type="component" value="Chromosome"/>
</dbReference>
<dbReference type="GO" id="GO:0005886">
    <property type="term" value="C:plasma membrane"/>
    <property type="evidence" value="ECO:0007669"/>
    <property type="project" value="UniProtKB-SubCell"/>
</dbReference>
<dbReference type="GO" id="GO:0005351">
    <property type="term" value="F:carbohydrate:proton symporter activity"/>
    <property type="evidence" value="ECO:0007669"/>
    <property type="project" value="InterPro"/>
</dbReference>
<dbReference type="GO" id="GO:0016301">
    <property type="term" value="F:kinase activity"/>
    <property type="evidence" value="ECO:0007669"/>
    <property type="project" value="UniProtKB-KW"/>
</dbReference>
<dbReference type="GO" id="GO:0022877">
    <property type="term" value="F:protein-N(PI)-phosphohistidine-fructose phosphotransferase system transporter activity"/>
    <property type="evidence" value="ECO:0007669"/>
    <property type="project" value="InterPro"/>
</dbReference>
<dbReference type="GO" id="GO:0090563">
    <property type="term" value="F:protein-phosphocysteine-sugar phosphotransferase activity"/>
    <property type="evidence" value="ECO:0007669"/>
    <property type="project" value="TreeGrafter"/>
</dbReference>
<dbReference type="GO" id="GO:0009401">
    <property type="term" value="P:phosphoenolpyruvate-dependent sugar phosphotransferase system"/>
    <property type="evidence" value="ECO:0007669"/>
    <property type="project" value="UniProtKB-KW"/>
</dbReference>
<dbReference type="CDD" id="cd00211">
    <property type="entry name" value="PTS_IIA_fru"/>
    <property type="match status" value="1"/>
</dbReference>
<dbReference type="CDD" id="cd05569">
    <property type="entry name" value="PTS_IIB_fructose"/>
    <property type="match status" value="1"/>
</dbReference>
<dbReference type="Gene3D" id="3.40.50.2300">
    <property type="match status" value="1"/>
</dbReference>
<dbReference type="Gene3D" id="3.40.930.10">
    <property type="entry name" value="Mannitol-specific EII, Chain A"/>
    <property type="match status" value="1"/>
</dbReference>
<dbReference type="InterPro" id="IPR050864">
    <property type="entry name" value="Bacterial_PTS_Sugar_Transport"/>
</dbReference>
<dbReference type="InterPro" id="IPR016152">
    <property type="entry name" value="PTrfase/Anion_transptr"/>
</dbReference>
<dbReference type="InterPro" id="IPR002178">
    <property type="entry name" value="PTS_EIIA_type-2_dom"/>
</dbReference>
<dbReference type="InterPro" id="IPR036095">
    <property type="entry name" value="PTS_EIIB-like_sf"/>
</dbReference>
<dbReference type="InterPro" id="IPR013011">
    <property type="entry name" value="PTS_EIIB_2"/>
</dbReference>
<dbReference type="InterPro" id="IPR003501">
    <property type="entry name" value="PTS_EIIB_2/3"/>
</dbReference>
<dbReference type="InterPro" id="IPR003352">
    <property type="entry name" value="PTS_EIIC"/>
</dbReference>
<dbReference type="InterPro" id="IPR013014">
    <property type="entry name" value="PTS_EIIC_2"/>
</dbReference>
<dbReference type="InterPro" id="IPR004715">
    <property type="entry name" value="PTS_IIA_fruc"/>
</dbReference>
<dbReference type="InterPro" id="IPR003353">
    <property type="entry name" value="PTS_IIB_fruc"/>
</dbReference>
<dbReference type="InterPro" id="IPR006327">
    <property type="entry name" value="PTS_IIC_fruc"/>
</dbReference>
<dbReference type="NCBIfam" id="TIGR00829">
    <property type="entry name" value="FRU"/>
    <property type="match status" value="1"/>
</dbReference>
<dbReference type="NCBIfam" id="TIGR00848">
    <property type="entry name" value="fruA"/>
    <property type="match status" value="1"/>
</dbReference>
<dbReference type="NCBIfam" id="TIGR01427">
    <property type="entry name" value="PTS_IIC_fructo"/>
    <property type="match status" value="1"/>
</dbReference>
<dbReference type="PANTHER" id="PTHR30505">
    <property type="entry name" value="FRUCTOSE-LIKE PERMEASE"/>
    <property type="match status" value="1"/>
</dbReference>
<dbReference type="PANTHER" id="PTHR30505:SF0">
    <property type="entry name" value="FRUCTOSE-LIKE PTS SYSTEM EIIBC COMPONENT-RELATED"/>
    <property type="match status" value="1"/>
</dbReference>
<dbReference type="Pfam" id="PF00359">
    <property type="entry name" value="PTS_EIIA_2"/>
    <property type="match status" value="1"/>
</dbReference>
<dbReference type="Pfam" id="PF02378">
    <property type="entry name" value="PTS_EIIC"/>
    <property type="match status" value="1"/>
</dbReference>
<dbReference type="Pfam" id="PF02302">
    <property type="entry name" value="PTS_IIB"/>
    <property type="match status" value="1"/>
</dbReference>
<dbReference type="SUPFAM" id="SSF55804">
    <property type="entry name" value="Phoshotransferase/anion transport protein"/>
    <property type="match status" value="1"/>
</dbReference>
<dbReference type="SUPFAM" id="SSF52794">
    <property type="entry name" value="PTS system IIB component-like"/>
    <property type="match status" value="1"/>
</dbReference>
<dbReference type="PROSITE" id="PS51094">
    <property type="entry name" value="PTS_EIIA_TYPE_2"/>
    <property type="match status" value="1"/>
</dbReference>
<dbReference type="PROSITE" id="PS51099">
    <property type="entry name" value="PTS_EIIB_TYPE_2"/>
    <property type="match status" value="1"/>
</dbReference>
<dbReference type="PROSITE" id="PS51104">
    <property type="entry name" value="PTS_EIIC_TYPE_2"/>
    <property type="match status" value="1"/>
</dbReference>
<organism>
    <name type="scientific">Mycoplasma pneumoniae (strain ATCC 29342 / M129 / Subtype 1)</name>
    <name type="common">Mycoplasmoides pneumoniae</name>
    <dbReference type="NCBI Taxonomy" id="272634"/>
    <lineage>
        <taxon>Bacteria</taxon>
        <taxon>Bacillati</taxon>
        <taxon>Mycoplasmatota</taxon>
        <taxon>Mycoplasmoidales</taxon>
        <taxon>Mycoplasmoidaceae</taxon>
        <taxon>Mycoplasmoides</taxon>
    </lineage>
</organism>